<protein>
    <recommendedName>
        <fullName>Sugar transporter SWEET1</fullName>
        <shortName>HsSWEET1</shortName>
    </recommendedName>
    <alternativeName>
        <fullName>RAG1-activating protein 1</fullName>
    </alternativeName>
    <alternativeName>
        <fullName>Solute carrier family 50 member 1</fullName>
    </alternativeName>
    <alternativeName>
        <fullName>Stromal cell protein</fullName>
    </alternativeName>
</protein>
<organism>
    <name type="scientific">Homo sapiens</name>
    <name type="common">Human</name>
    <dbReference type="NCBI Taxonomy" id="9606"/>
    <lineage>
        <taxon>Eukaryota</taxon>
        <taxon>Metazoa</taxon>
        <taxon>Chordata</taxon>
        <taxon>Craniata</taxon>
        <taxon>Vertebrata</taxon>
        <taxon>Euteleostomi</taxon>
        <taxon>Mammalia</taxon>
        <taxon>Eutheria</taxon>
        <taxon>Euarchontoglires</taxon>
        <taxon>Primates</taxon>
        <taxon>Haplorrhini</taxon>
        <taxon>Catarrhini</taxon>
        <taxon>Hominidae</taxon>
        <taxon>Homo</taxon>
    </lineage>
</organism>
<accession>Q9BRV3</accession>
<accession>Q5SR64</accession>
<accession>Q6IAK6</accession>
<accession>Q96DC5</accession>
<accession>Q9UHQ2</accession>
<accession>Q9UHQ3</accession>
<reference key="1">
    <citation type="journal article" date="2000" name="Proc. Natl. Acad. Sci. U.S.A.">
        <title>Gene expression profiling in the human hypothalamus-pituitary-adrenal axis and full-length cDNA cloning.</title>
        <authorList>
            <person name="Hu R.-M."/>
            <person name="Han Z.-G."/>
            <person name="Song H.-D."/>
            <person name="Peng Y.-D."/>
            <person name="Huang Q.-H."/>
            <person name="Ren S.-X."/>
            <person name="Gu Y.-J."/>
            <person name="Huang C.-H."/>
            <person name="Li Y.-B."/>
            <person name="Jiang C.-L."/>
            <person name="Fu G."/>
            <person name="Zhang Q.-H."/>
            <person name="Gu B.-W."/>
            <person name="Dai M."/>
            <person name="Mao Y.-F."/>
            <person name="Gao G.-F."/>
            <person name="Rong R."/>
            <person name="Ye M."/>
            <person name="Zhou J."/>
            <person name="Xu S.-H."/>
            <person name="Gu J."/>
            <person name="Shi J.-X."/>
            <person name="Jin W.-R."/>
            <person name="Zhang C.-K."/>
            <person name="Wu T.-M."/>
            <person name="Huang G.-Y."/>
            <person name="Chen Z."/>
            <person name="Chen M.-D."/>
            <person name="Chen J.-L."/>
        </authorList>
    </citation>
    <scope>NUCLEOTIDE SEQUENCE [LARGE SCALE MRNA] (ISOFORMS 1 AND 2)</scope>
    <source>
        <tissue>Adrenal gland</tissue>
    </source>
</reference>
<reference key="2">
    <citation type="journal article" date="2004" name="Nat. Genet.">
        <title>Complete sequencing and characterization of 21,243 full-length human cDNAs.</title>
        <authorList>
            <person name="Ota T."/>
            <person name="Suzuki Y."/>
            <person name="Nishikawa T."/>
            <person name="Otsuki T."/>
            <person name="Sugiyama T."/>
            <person name="Irie R."/>
            <person name="Wakamatsu A."/>
            <person name="Hayashi K."/>
            <person name="Sato H."/>
            <person name="Nagai K."/>
            <person name="Kimura K."/>
            <person name="Makita H."/>
            <person name="Sekine M."/>
            <person name="Obayashi M."/>
            <person name="Nishi T."/>
            <person name="Shibahara T."/>
            <person name="Tanaka T."/>
            <person name="Ishii S."/>
            <person name="Yamamoto J."/>
            <person name="Saito K."/>
            <person name="Kawai Y."/>
            <person name="Isono Y."/>
            <person name="Nakamura Y."/>
            <person name="Nagahari K."/>
            <person name="Murakami K."/>
            <person name="Yasuda T."/>
            <person name="Iwayanagi T."/>
            <person name="Wagatsuma M."/>
            <person name="Shiratori A."/>
            <person name="Sudo H."/>
            <person name="Hosoiri T."/>
            <person name="Kaku Y."/>
            <person name="Kodaira H."/>
            <person name="Kondo H."/>
            <person name="Sugawara M."/>
            <person name="Takahashi M."/>
            <person name="Kanda K."/>
            <person name="Yokoi T."/>
            <person name="Furuya T."/>
            <person name="Kikkawa E."/>
            <person name="Omura Y."/>
            <person name="Abe K."/>
            <person name="Kamihara K."/>
            <person name="Katsuta N."/>
            <person name="Sato K."/>
            <person name="Tanikawa M."/>
            <person name="Yamazaki M."/>
            <person name="Ninomiya K."/>
            <person name="Ishibashi T."/>
            <person name="Yamashita H."/>
            <person name="Murakawa K."/>
            <person name="Fujimori K."/>
            <person name="Tanai H."/>
            <person name="Kimata M."/>
            <person name="Watanabe M."/>
            <person name="Hiraoka S."/>
            <person name="Chiba Y."/>
            <person name="Ishida S."/>
            <person name="Ono Y."/>
            <person name="Takiguchi S."/>
            <person name="Watanabe S."/>
            <person name="Yosida M."/>
            <person name="Hotuta T."/>
            <person name="Kusano J."/>
            <person name="Kanehori K."/>
            <person name="Takahashi-Fujii A."/>
            <person name="Hara H."/>
            <person name="Tanase T.-O."/>
            <person name="Nomura Y."/>
            <person name="Togiya S."/>
            <person name="Komai F."/>
            <person name="Hara R."/>
            <person name="Takeuchi K."/>
            <person name="Arita M."/>
            <person name="Imose N."/>
            <person name="Musashino K."/>
            <person name="Yuuki H."/>
            <person name="Oshima A."/>
            <person name="Sasaki N."/>
            <person name="Aotsuka S."/>
            <person name="Yoshikawa Y."/>
            <person name="Matsunawa H."/>
            <person name="Ichihara T."/>
            <person name="Shiohata N."/>
            <person name="Sano S."/>
            <person name="Moriya S."/>
            <person name="Momiyama H."/>
            <person name="Satoh N."/>
            <person name="Takami S."/>
            <person name="Terashima Y."/>
            <person name="Suzuki O."/>
            <person name="Nakagawa S."/>
            <person name="Senoh A."/>
            <person name="Mizoguchi H."/>
            <person name="Goto Y."/>
            <person name="Shimizu F."/>
            <person name="Wakebe H."/>
            <person name="Hishigaki H."/>
            <person name="Watanabe T."/>
            <person name="Sugiyama A."/>
            <person name="Takemoto M."/>
            <person name="Kawakami B."/>
            <person name="Yamazaki M."/>
            <person name="Watanabe K."/>
            <person name="Kumagai A."/>
            <person name="Itakura S."/>
            <person name="Fukuzumi Y."/>
            <person name="Fujimori Y."/>
            <person name="Komiyama M."/>
            <person name="Tashiro H."/>
            <person name="Tanigami A."/>
            <person name="Fujiwara T."/>
            <person name="Ono T."/>
            <person name="Yamada K."/>
            <person name="Fujii Y."/>
            <person name="Ozaki K."/>
            <person name="Hirao M."/>
            <person name="Ohmori Y."/>
            <person name="Kawabata A."/>
            <person name="Hikiji T."/>
            <person name="Kobatake N."/>
            <person name="Inagaki H."/>
            <person name="Ikema Y."/>
            <person name="Okamoto S."/>
            <person name="Okitani R."/>
            <person name="Kawakami T."/>
            <person name="Noguchi S."/>
            <person name="Itoh T."/>
            <person name="Shigeta K."/>
            <person name="Senba T."/>
            <person name="Matsumura K."/>
            <person name="Nakajima Y."/>
            <person name="Mizuno T."/>
            <person name="Morinaga M."/>
            <person name="Sasaki M."/>
            <person name="Togashi T."/>
            <person name="Oyama M."/>
            <person name="Hata H."/>
            <person name="Watanabe M."/>
            <person name="Komatsu T."/>
            <person name="Mizushima-Sugano J."/>
            <person name="Satoh T."/>
            <person name="Shirai Y."/>
            <person name="Takahashi Y."/>
            <person name="Nakagawa K."/>
            <person name="Okumura K."/>
            <person name="Nagase T."/>
            <person name="Nomura N."/>
            <person name="Kikuchi H."/>
            <person name="Masuho Y."/>
            <person name="Yamashita R."/>
            <person name="Nakai K."/>
            <person name="Yada T."/>
            <person name="Nakamura Y."/>
            <person name="Ohara O."/>
            <person name="Isogai T."/>
            <person name="Sugano S."/>
        </authorList>
    </citation>
    <scope>NUCLEOTIDE SEQUENCE [LARGE SCALE MRNA] (ISOFORM 1)</scope>
    <source>
        <tissue>Cerebellum</tissue>
    </source>
</reference>
<reference key="3">
    <citation type="submission" date="2004-06" db="EMBL/GenBank/DDBJ databases">
        <title>Cloning of human full open reading frames in Gateway(TM) system entry vector (pDONR201).</title>
        <authorList>
            <person name="Ebert L."/>
            <person name="Schick M."/>
            <person name="Neubert P."/>
            <person name="Schatten R."/>
            <person name="Henze S."/>
            <person name="Korn B."/>
        </authorList>
    </citation>
    <scope>NUCLEOTIDE SEQUENCE [LARGE SCALE MRNA] (ISOFORM 1)</scope>
</reference>
<reference key="4">
    <citation type="journal article" date="2006" name="Nature">
        <title>The DNA sequence and biological annotation of human chromosome 1.</title>
        <authorList>
            <person name="Gregory S.G."/>
            <person name="Barlow K.F."/>
            <person name="McLay K.E."/>
            <person name="Kaul R."/>
            <person name="Swarbreck D."/>
            <person name="Dunham A."/>
            <person name="Scott C.E."/>
            <person name="Howe K.L."/>
            <person name="Woodfine K."/>
            <person name="Spencer C.C.A."/>
            <person name="Jones M.C."/>
            <person name="Gillson C."/>
            <person name="Searle S."/>
            <person name="Zhou Y."/>
            <person name="Kokocinski F."/>
            <person name="McDonald L."/>
            <person name="Evans R."/>
            <person name="Phillips K."/>
            <person name="Atkinson A."/>
            <person name="Cooper R."/>
            <person name="Jones C."/>
            <person name="Hall R.E."/>
            <person name="Andrews T.D."/>
            <person name="Lloyd C."/>
            <person name="Ainscough R."/>
            <person name="Almeida J.P."/>
            <person name="Ambrose K.D."/>
            <person name="Anderson F."/>
            <person name="Andrew R.W."/>
            <person name="Ashwell R.I.S."/>
            <person name="Aubin K."/>
            <person name="Babbage A.K."/>
            <person name="Bagguley C.L."/>
            <person name="Bailey J."/>
            <person name="Beasley H."/>
            <person name="Bethel G."/>
            <person name="Bird C.P."/>
            <person name="Bray-Allen S."/>
            <person name="Brown J.Y."/>
            <person name="Brown A.J."/>
            <person name="Buckley D."/>
            <person name="Burton J."/>
            <person name="Bye J."/>
            <person name="Carder C."/>
            <person name="Chapman J.C."/>
            <person name="Clark S.Y."/>
            <person name="Clarke G."/>
            <person name="Clee C."/>
            <person name="Cobley V."/>
            <person name="Collier R.E."/>
            <person name="Corby N."/>
            <person name="Coville G.J."/>
            <person name="Davies J."/>
            <person name="Deadman R."/>
            <person name="Dunn M."/>
            <person name="Earthrowl M."/>
            <person name="Ellington A.G."/>
            <person name="Errington H."/>
            <person name="Frankish A."/>
            <person name="Frankland J."/>
            <person name="French L."/>
            <person name="Garner P."/>
            <person name="Garnett J."/>
            <person name="Gay L."/>
            <person name="Ghori M.R.J."/>
            <person name="Gibson R."/>
            <person name="Gilby L.M."/>
            <person name="Gillett W."/>
            <person name="Glithero R.J."/>
            <person name="Grafham D.V."/>
            <person name="Griffiths C."/>
            <person name="Griffiths-Jones S."/>
            <person name="Grocock R."/>
            <person name="Hammond S."/>
            <person name="Harrison E.S.I."/>
            <person name="Hart E."/>
            <person name="Haugen E."/>
            <person name="Heath P.D."/>
            <person name="Holmes S."/>
            <person name="Holt K."/>
            <person name="Howden P.J."/>
            <person name="Hunt A.R."/>
            <person name="Hunt S.E."/>
            <person name="Hunter G."/>
            <person name="Isherwood J."/>
            <person name="James R."/>
            <person name="Johnson C."/>
            <person name="Johnson D."/>
            <person name="Joy A."/>
            <person name="Kay M."/>
            <person name="Kershaw J.K."/>
            <person name="Kibukawa M."/>
            <person name="Kimberley A.M."/>
            <person name="King A."/>
            <person name="Knights A.J."/>
            <person name="Lad H."/>
            <person name="Laird G."/>
            <person name="Lawlor S."/>
            <person name="Leongamornlert D.A."/>
            <person name="Lloyd D.M."/>
            <person name="Loveland J."/>
            <person name="Lovell J."/>
            <person name="Lush M.J."/>
            <person name="Lyne R."/>
            <person name="Martin S."/>
            <person name="Mashreghi-Mohammadi M."/>
            <person name="Matthews L."/>
            <person name="Matthews N.S.W."/>
            <person name="McLaren S."/>
            <person name="Milne S."/>
            <person name="Mistry S."/>
            <person name="Moore M.J.F."/>
            <person name="Nickerson T."/>
            <person name="O'Dell C.N."/>
            <person name="Oliver K."/>
            <person name="Palmeiri A."/>
            <person name="Palmer S.A."/>
            <person name="Parker A."/>
            <person name="Patel D."/>
            <person name="Pearce A.V."/>
            <person name="Peck A.I."/>
            <person name="Pelan S."/>
            <person name="Phelps K."/>
            <person name="Phillimore B.J."/>
            <person name="Plumb R."/>
            <person name="Rajan J."/>
            <person name="Raymond C."/>
            <person name="Rouse G."/>
            <person name="Saenphimmachak C."/>
            <person name="Sehra H.K."/>
            <person name="Sheridan E."/>
            <person name="Shownkeen R."/>
            <person name="Sims S."/>
            <person name="Skuce C.D."/>
            <person name="Smith M."/>
            <person name="Steward C."/>
            <person name="Subramanian S."/>
            <person name="Sycamore N."/>
            <person name="Tracey A."/>
            <person name="Tromans A."/>
            <person name="Van Helmond Z."/>
            <person name="Wall M."/>
            <person name="Wallis J.M."/>
            <person name="White S."/>
            <person name="Whitehead S.L."/>
            <person name="Wilkinson J.E."/>
            <person name="Willey D.L."/>
            <person name="Williams H."/>
            <person name="Wilming L."/>
            <person name="Wray P.W."/>
            <person name="Wu Z."/>
            <person name="Coulson A."/>
            <person name="Vaudin M."/>
            <person name="Sulston J.E."/>
            <person name="Durbin R.M."/>
            <person name="Hubbard T."/>
            <person name="Wooster R."/>
            <person name="Dunham I."/>
            <person name="Carter N.P."/>
            <person name="McVean G."/>
            <person name="Ross M.T."/>
            <person name="Harrow J."/>
            <person name="Olson M.V."/>
            <person name="Beck S."/>
            <person name="Rogers J."/>
            <person name="Bentley D.R."/>
        </authorList>
    </citation>
    <scope>NUCLEOTIDE SEQUENCE [LARGE SCALE GENOMIC DNA]</scope>
</reference>
<reference key="5">
    <citation type="journal article" date="2004" name="Genome Res.">
        <title>The status, quality, and expansion of the NIH full-length cDNA project: the Mammalian Gene Collection (MGC).</title>
        <authorList>
            <consortium name="The MGC Project Team"/>
        </authorList>
    </citation>
    <scope>NUCLEOTIDE SEQUENCE [LARGE SCALE MRNA] (ISOFORMS 1 AND 3)</scope>
    <source>
        <tissue>Brain</tissue>
        <tissue>Pancreas</tissue>
    </source>
</reference>
<reference key="6">
    <citation type="journal article" date="2010" name="Nature">
        <title>Sugar transporters for intercellular exchange and nutrition of pathogens.</title>
        <authorList>
            <person name="Chen L.-Q."/>
            <person name="Hou B.-H."/>
            <person name="Lalonde S."/>
            <person name="Takanaga H."/>
            <person name="Hartung M.L."/>
            <person name="Qu X.-Q."/>
            <person name="Guo W.-J."/>
            <person name="Kim J.-G."/>
            <person name="Underwood W."/>
            <person name="Chaudhuri B."/>
            <person name="Chermak D."/>
            <person name="Antony G."/>
            <person name="White F.F."/>
            <person name="Somerville S.C."/>
            <person name="Mudgett M.B."/>
            <person name="Frommer W.B."/>
        </authorList>
    </citation>
    <scope>FUNCTION</scope>
    <scope>SUBCELLULAR LOCATION</scope>
    <scope>TISSUE SPECIFICITY</scope>
</reference>
<name>SWET1_HUMAN</name>
<comment type="function">
    <text evidence="3">Mediates sugar transport across membranes. May stimulate V(D)J recombination by the activation of RAG1.</text>
</comment>
<comment type="subunit">
    <text evidence="1">Interacts with TRPV2; the interaction probably occurs intracellularly and depends on TRPV2 N-glycosylation.</text>
</comment>
<comment type="interaction">
    <interactant intactId="EBI-8634123">
        <id>Q9BRV3</id>
    </interactant>
    <interactant intactId="EBI-7825321">
        <id>Q96E29</id>
        <label>MTERF3</label>
    </interactant>
    <organismsDiffer>false</organismsDiffer>
    <experiments>3</experiments>
</comment>
<comment type="interaction">
    <interactant intactId="EBI-8634123">
        <id>Q9BRV3</id>
    </interactant>
    <interactant intactId="EBI-727004">
        <id>O00560</id>
        <label>SDCBP</label>
    </interactant>
    <organismsDiffer>false</organismsDiffer>
    <experiments>3</experiments>
</comment>
<comment type="interaction">
    <interactant intactId="EBI-8634123">
        <id>Q9BRV3</id>
    </interactant>
    <interactant intactId="EBI-2872322">
        <id>Q9H0W8</id>
        <label>SMG9</label>
    </interactant>
    <organismsDiffer>false</organismsDiffer>
    <experiments>3</experiments>
</comment>
<comment type="subcellular location">
    <subcellularLocation>
        <location evidence="3">Golgi apparatus membrane</location>
        <topology evidence="3">Multi-pass membrane protein</topology>
    </subcellularLocation>
    <subcellularLocation>
        <location evidence="3">Cell membrane</location>
        <topology evidence="3">Multi-pass membrane protein</topology>
    </subcellularLocation>
    <text evidence="1">May also localize to the endoplasmic reticulum.</text>
</comment>
<comment type="alternative products">
    <event type="alternative splicing"/>
    <isoform>
        <id>Q9BRV3-1</id>
        <name>1</name>
        <sequence type="displayed"/>
    </isoform>
    <isoform>
        <id>Q9BRV3-2</id>
        <name>2</name>
        <sequence type="described" ref="VSP_034916 VSP_034917"/>
    </isoform>
    <isoform>
        <id>Q9BRV3-3</id>
        <name>3</name>
        <sequence type="described" ref="VSP_034918"/>
    </isoform>
</comment>
<comment type="tissue specificity">
    <text evidence="3">Ubiquitously expressed with highest expression in oviduct, epididymis and intestine.</text>
</comment>
<comment type="similarity">
    <text evidence="6">Belongs to the SWEET sugar transporter family.</text>
</comment>
<comment type="sequence caution" evidence="6">
    <molecule>Isoform 2</molecule>
    <conflict type="frameshift">
        <sequence resource="EMBL-CDS" id="AAF17233"/>
    </conflict>
</comment>
<sequence length="221" mass="25030">MEAGGFLDSLIYGACVVFTLGMFSAGLSDLRHMRMTRSVDNVQFLPFLTTEVNNLGWLSYGALKGDGILIVVNTVGAALQTLYILAYLHYCPRKRVVLLQTATLLGVLLLGYGYFWLLVPNPEARLQQLGLFCSVFTISMYLSPLADLAKVIQTKSTQCLSYPLTIATLLTSASWCLYGFRLRDPYIMVSNFPGIVTSFIRFWLFWKYPQEQDRNYWLLQT</sequence>
<proteinExistence type="evidence at protein level"/>
<gene>
    <name type="primary">SLC50A1</name>
    <name type="synonym">RAG1AP1</name>
    <name type="synonym">SCP</name>
</gene>
<feature type="chain" id="PRO_0000345116" description="Sugar transporter SWEET1">
    <location>
        <begin position="1"/>
        <end position="221"/>
    </location>
</feature>
<feature type="transmembrane region" description="Helical; Name=1" evidence="2">
    <location>
        <begin position="3"/>
        <end position="23"/>
    </location>
</feature>
<feature type="transmembrane region" description="Helical; Name=2" evidence="2">
    <location>
        <begin position="42"/>
        <end position="62"/>
    </location>
</feature>
<feature type="transmembrane region" description="Helical; Name=3" evidence="2">
    <location>
        <begin position="68"/>
        <end position="88"/>
    </location>
</feature>
<feature type="transmembrane region" description="Helical; Name=4" evidence="2">
    <location>
        <begin position="96"/>
        <end position="116"/>
    </location>
</feature>
<feature type="transmembrane region" description="Helical; Name=5" evidence="2">
    <location>
        <begin position="129"/>
        <end position="149"/>
    </location>
</feature>
<feature type="transmembrane region" description="Helical; Name=6" evidence="2">
    <location>
        <begin position="160"/>
        <end position="180"/>
    </location>
</feature>
<feature type="transmembrane region" description="Helical; Name=7" evidence="2">
    <location>
        <begin position="186"/>
        <end position="206"/>
    </location>
</feature>
<feature type="domain" description="MtN3/slv 1">
    <location>
        <begin position="10"/>
        <end position="94"/>
    </location>
</feature>
<feature type="domain" description="MtN3/slv 2">
    <location>
        <begin position="127"/>
        <end position="212"/>
    </location>
</feature>
<feature type="region of interest" description="Mediates interaction with TRPV2" evidence="1">
    <location>
        <begin position="149"/>
        <end position="221"/>
    </location>
</feature>
<feature type="splice variant" id="VSP_034916" description="In isoform 2." evidence="4">
    <location>
        <begin position="1"/>
        <end position="55"/>
    </location>
</feature>
<feature type="splice variant" id="VSP_034917" description="In isoform 2." evidence="4">
    <original>GWLSYGALKGDGILIVVNTVGAALQTLYILAYLHYCPRK</original>
    <variation>MRGLHPWHVLRRPLGPQAHANDPECGQRPVPALSHHGSQ</variation>
    <location>
        <begin position="56"/>
        <end position="94"/>
    </location>
</feature>
<feature type="splice variant" id="VSP_034918" description="In isoform 3." evidence="5">
    <location>
        <begin position="95"/>
        <end position="148"/>
    </location>
</feature>
<feature type="sequence conflict" description="In Ref. 1; AAF17232." evidence="6" ref="1">
    <original>Q</original>
    <variation>R</variation>
    <location>
        <position position="43"/>
    </location>
</feature>
<feature type="sequence conflict" description="In Ref. 3; CAG33429." evidence="6" ref="3">
    <original>G</original>
    <variation>A</variation>
    <location>
        <position position="130"/>
    </location>
</feature>
<dbReference type="EMBL" id="AF126023">
    <property type="protein sequence ID" value="AAF17232.1"/>
    <property type="molecule type" value="mRNA"/>
</dbReference>
<dbReference type="EMBL" id="AF126024">
    <property type="protein sequence ID" value="AAF17233.1"/>
    <property type="status" value="ALT_FRAME"/>
    <property type="molecule type" value="mRNA"/>
</dbReference>
<dbReference type="EMBL" id="AK289551">
    <property type="protein sequence ID" value="BAF82240.1"/>
    <property type="molecule type" value="mRNA"/>
</dbReference>
<dbReference type="EMBL" id="CR457148">
    <property type="protein sequence ID" value="CAG33429.1"/>
    <property type="molecule type" value="mRNA"/>
</dbReference>
<dbReference type="EMBL" id="AL691442">
    <property type="status" value="NOT_ANNOTATED_CDS"/>
    <property type="molecule type" value="Genomic_DNA"/>
</dbReference>
<dbReference type="EMBL" id="BC005943">
    <property type="protein sequence ID" value="AAH05943.1"/>
    <property type="molecule type" value="mRNA"/>
</dbReference>
<dbReference type="EMBL" id="BC009621">
    <property type="protein sequence ID" value="AAH09621.1"/>
    <property type="molecule type" value="mRNA"/>
</dbReference>
<dbReference type="CCDS" id="CCDS1093.1">
    <molecule id="Q9BRV3-1"/>
</dbReference>
<dbReference type="CCDS" id="CCDS44238.1">
    <molecule id="Q9BRV3-3"/>
</dbReference>
<dbReference type="CCDS" id="CCDS44239.1">
    <molecule id="Q9BRV3-2"/>
</dbReference>
<dbReference type="RefSeq" id="NP_001116309.1">
    <molecule id="Q9BRV3-2"/>
    <property type="nucleotide sequence ID" value="NM_001122837.2"/>
</dbReference>
<dbReference type="RefSeq" id="NP_001116311.1">
    <molecule id="Q9BRV3-3"/>
    <property type="nucleotide sequence ID" value="NM_001122839.2"/>
</dbReference>
<dbReference type="RefSeq" id="NP_001274515.1">
    <property type="nucleotide sequence ID" value="NM_001287586.1"/>
</dbReference>
<dbReference type="RefSeq" id="NP_001274516.1">
    <property type="nucleotide sequence ID" value="NM_001287587.1"/>
</dbReference>
<dbReference type="RefSeq" id="NP_001274517.1">
    <property type="nucleotide sequence ID" value="NM_001287588.1"/>
</dbReference>
<dbReference type="RefSeq" id="NP_001274519.1">
    <property type="nucleotide sequence ID" value="NM_001287590.1"/>
</dbReference>
<dbReference type="RefSeq" id="NP_001274520.1">
    <property type="nucleotide sequence ID" value="NM_001287591.1"/>
</dbReference>
<dbReference type="RefSeq" id="NP_001274521.1">
    <property type="nucleotide sequence ID" value="NM_001287592.1"/>
</dbReference>
<dbReference type="RefSeq" id="NP_061333.2">
    <molecule id="Q9BRV3-1"/>
    <property type="nucleotide sequence ID" value="NM_018845.4"/>
</dbReference>
<dbReference type="SMR" id="Q9BRV3"/>
<dbReference type="BioGRID" id="121020">
    <property type="interactions" value="7"/>
</dbReference>
<dbReference type="FunCoup" id="Q9BRV3">
    <property type="interactions" value="827"/>
</dbReference>
<dbReference type="IntAct" id="Q9BRV3">
    <property type="interactions" value="7"/>
</dbReference>
<dbReference type="MINT" id="Q9BRV3"/>
<dbReference type="STRING" id="9606.ENSP00000357389"/>
<dbReference type="TCDB" id="2.A.123.1.4">
    <property type="family name" value="the sweet, pq-loop, saliva, mtn3 (sweet) family"/>
</dbReference>
<dbReference type="iPTMnet" id="Q9BRV3"/>
<dbReference type="PhosphoSitePlus" id="Q9BRV3"/>
<dbReference type="SwissPalm" id="Q9BRV3"/>
<dbReference type="BioMuta" id="SLC50A1"/>
<dbReference type="DMDM" id="74752289"/>
<dbReference type="jPOST" id="Q9BRV3"/>
<dbReference type="MassIVE" id="Q9BRV3"/>
<dbReference type="PaxDb" id="9606-ENSP00000357389"/>
<dbReference type="PeptideAtlas" id="Q9BRV3"/>
<dbReference type="ProteomicsDB" id="78840">
    <molecule id="Q9BRV3-1"/>
</dbReference>
<dbReference type="ProteomicsDB" id="78841">
    <molecule id="Q9BRV3-2"/>
</dbReference>
<dbReference type="ProteomicsDB" id="78842">
    <molecule id="Q9BRV3-3"/>
</dbReference>
<dbReference type="Antibodypedia" id="3097">
    <property type="antibodies" value="62 antibodies from 18 providers"/>
</dbReference>
<dbReference type="DNASU" id="55974"/>
<dbReference type="Ensembl" id="ENST00000303343.12">
    <molecule id="Q9BRV3-3"/>
    <property type="protein sequence ID" value="ENSP00000306146.8"/>
    <property type="gene ID" value="ENSG00000169241.19"/>
</dbReference>
<dbReference type="Ensembl" id="ENST00000368401.6">
    <molecule id="Q9BRV3-2"/>
    <property type="protein sequence ID" value="ENSP00000357386.5"/>
    <property type="gene ID" value="ENSG00000169241.19"/>
</dbReference>
<dbReference type="Ensembl" id="ENST00000368404.9">
    <molecule id="Q9BRV3-1"/>
    <property type="protein sequence ID" value="ENSP00000357389.4"/>
    <property type="gene ID" value="ENSG00000169241.19"/>
</dbReference>
<dbReference type="GeneID" id="55974"/>
<dbReference type="KEGG" id="hsa:55974"/>
<dbReference type="MANE-Select" id="ENST00000368404.9">
    <property type="protein sequence ID" value="ENSP00000357389.4"/>
    <property type="RefSeq nucleotide sequence ID" value="NM_018845.4"/>
    <property type="RefSeq protein sequence ID" value="NP_061333.2"/>
</dbReference>
<dbReference type="UCSC" id="uc001fhj.5">
    <molecule id="Q9BRV3-1"/>
    <property type="organism name" value="human"/>
</dbReference>
<dbReference type="AGR" id="HGNC:30657"/>
<dbReference type="CTD" id="55974"/>
<dbReference type="DisGeNET" id="55974"/>
<dbReference type="GeneCards" id="SLC50A1"/>
<dbReference type="HGNC" id="HGNC:30657">
    <property type="gene designation" value="SLC50A1"/>
</dbReference>
<dbReference type="HPA" id="ENSG00000169241">
    <property type="expression patterns" value="Low tissue specificity"/>
</dbReference>
<dbReference type="MIM" id="613683">
    <property type="type" value="gene"/>
</dbReference>
<dbReference type="neXtProt" id="NX_Q9BRV3"/>
<dbReference type="OpenTargets" id="ENSG00000169241"/>
<dbReference type="PharmGKB" id="PA142671099"/>
<dbReference type="VEuPathDB" id="HostDB:ENSG00000169241"/>
<dbReference type="eggNOG" id="KOG1623">
    <property type="taxonomic scope" value="Eukaryota"/>
</dbReference>
<dbReference type="GeneTree" id="ENSGT00390000007801"/>
<dbReference type="HOGENOM" id="CLU_048643_3_0_1"/>
<dbReference type="InParanoid" id="Q9BRV3"/>
<dbReference type="OMA" id="QLNDYYI"/>
<dbReference type="OrthoDB" id="409725at2759"/>
<dbReference type="PAN-GO" id="Q9BRV3">
    <property type="GO annotations" value="3 GO annotations based on evolutionary models"/>
</dbReference>
<dbReference type="PhylomeDB" id="Q9BRV3"/>
<dbReference type="TreeFam" id="TF313635"/>
<dbReference type="PathwayCommons" id="Q9BRV3"/>
<dbReference type="Reactome" id="R-HSA-189200">
    <property type="pathway name" value="Cellular hexose transport"/>
</dbReference>
<dbReference type="SignaLink" id="Q9BRV3"/>
<dbReference type="BioGRID-ORCS" id="55974">
    <property type="hits" value="23 hits in 1155 CRISPR screens"/>
</dbReference>
<dbReference type="ChiTaRS" id="SLC50A1">
    <property type="organism name" value="human"/>
</dbReference>
<dbReference type="GenomeRNAi" id="55974"/>
<dbReference type="Pharos" id="Q9BRV3">
    <property type="development level" value="Tbio"/>
</dbReference>
<dbReference type="PRO" id="PR:Q9BRV3"/>
<dbReference type="Proteomes" id="UP000005640">
    <property type="component" value="Chromosome 1"/>
</dbReference>
<dbReference type="RNAct" id="Q9BRV3">
    <property type="molecule type" value="protein"/>
</dbReference>
<dbReference type="Bgee" id="ENSG00000169241">
    <property type="expression patterns" value="Expressed in mucosa of transverse colon and 194 other cell types or tissues"/>
</dbReference>
<dbReference type="ExpressionAtlas" id="Q9BRV3">
    <property type="expression patterns" value="baseline and differential"/>
</dbReference>
<dbReference type="GO" id="GO:0012505">
    <property type="term" value="C:endomembrane system"/>
    <property type="evidence" value="ECO:0000250"/>
    <property type="project" value="UniProtKB"/>
</dbReference>
<dbReference type="GO" id="GO:0005794">
    <property type="term" value="C:Golgi apparatus"/>
    <property type="evidence" value="ECO:0000314"/>
    <property type="project" value="UniProtKB"/>
</dbReference>
<dbReference type="GO" id="GO:0000139">
    <property type="term" value="C:Golgi membrane"/>
    <property type="evidence" value="ECO:0007669"/>
    <property type="project" value="UniProtKB-SubCell"/>
</dbReference>
<dbReference type="GO" id="GO:0016020">
    <property type="term" value="C:membrane"/>
    <property type="evidence" value="ECO:0000318"/>
    <property type="project" value="GO_Central"/>
</dbReference>
<dbReference type="GO" id="GO:0005886">
    <property type="term" value="C:plasma membrane"/>
    <property type="evidence" value="ECO:0000314"/>
    <property type="project" value="UniProtKB"/>
</dbReference>
<dbReference type="GO" id="GO:0042947">
    <property type="term" value="F:glucoside transmembrane transporter activity"/>
    <property type="evidence" value="ECO:0000314"/>
    <property type="project" value="UniProtKB"/>
</dbReference>
<dbReference type="GO" id="GO:0051119">
    <property type="term" value="F:sugar transmembrane transporter activity"/>
    <property type="evidence" value="ECO:0000318"/>
    <property type="project" value="GO_Central"/>
</dbReference>
<dbReference type="GO" id="GO:0008643">
    <property type="term" value="P:carbohydrate transport"/>
    <property type="evidence" value="ECO:0000318"/>
    <property type="project" value="GO_Central"/>
</dbReference>
<dbReference type="GO" id="GO:0008645">
    <property type="term" value="P:hexose transmembrane transport"/>
    <property type="evidence" value="ECO:0000304"/>
    <property type="project" value="Reactome"/>
</dbReference>
<dbReference type="FunFam" id="1.20.1280.290:FF:000021">
    <property type="entry name" value="Solute carrier family 50 member 1"/>
    <property type="match status" value="1"/>
</dbReference>
<dbReference type="FunFam" id="1.20.1280.290:FF:000010">
    <property type="entry name" value="Sugar transporter SWEET"/>
    <property type="match status" value="1"/>
</dbReference>
<dbReference type="Gene3D" id="1.20.1280.290">
    <property type="match status" value="2"/>
</dbReference>
<dbReference type="InterPro" id="IPR047664">
    <property type="entry name" value="SWEET"/>
</dbReference>
<dbReference type="InterPro" id="IPR004316">
    <property type="entry name" value="SWEET_rpt"/>
</dbReference>
<dbReference type="PANTHER" id="PTHR10791">
    <property type="entry name" value="RAG1-ACTIVATING PROTEIN 1"/>
    <property type="match status" value="1"/>
</dbReference>
<dbReference type="PANTHER" id="PTHR10791:SF30">
    <property type="entry name" value="SUGAR TRANSPORTER SWEET1"/>
    <property type="match status" value="1"/>
</dbReference>
<dbReference type="Pfam" id="PF03083">
    <property type="entry name" value="MtN3_slv"/>
    <property type="match status" value="2"/>
</dbReference>
<keyword id="KW-0025">Alternative splicing</keyword>
<keyword id="KW-1003">Cell membrane</keyword>
<keyword id="KW-0333">Golgi apparatus</keyword>
<keyword id="KW-0472">Membrane</keyword>
<keyword id="KW-1267">Proteomics identification</keyword>
<keyword id="KW-1185">Reference proteome</keyword>
<keyword id="KW-0677">Repeat</keyword>
<keyword id="KW-0762">Sugar transport</keyword>
<keyword id="KW-0812">Transmembrane</keyword>
<keyword id="KW-1133">Transmembrane helix</keyword>
<keyword id="KW-0813">Transport</keyword>
<evidence type="ECO:0000250" key="1"/>
<evidence type="ECO:0000255" key="2"/>
<evidence type="ECO:0000269" key="3">
    <source>
    </source>
</evidence>
<evidence type="ECO:0000303" key="4">
    <source>
    </source>
</evidence>
<evidence type="ECO:0000303" key="5">
    <source>
    </source>
</evidence>
<evidence type="ECO:0000305" key="6"/>